<comment type="similarity">
    <text evidence="1">Belongs to the bacterial ribosomal protein bL33 family.</text>
</comment>
<dbReference type="EMBL" id="CP000927">
    <property type="protein sequence ID" value="ABZ70629.1"/>
    <property type="molecule type" value="Genomic_DNA"/>
</dbReference>
<dbReference type="SMR" id="B0T0I3"/>
<dbReference type="STRING" id="366602.Caul_1499"/>
<dbReference type="KEGG" id="cak:Caul_1499"/>
<dbReference type="eggNOG" id="COG0267">
    <property type="taxonomic scope" value="Bacteria"/>
</dbReference>
<dbReference type="HOGENOM" id="CLU_190949_1_1_5"/>
<dbReference type="OrthoDB" id="21586at2"/>
<dbReference type="GO" id="GO:0022625">
    <property type="term" value="C:cytosolic large ribosomal subunit"/>
    <property type="evidence" value="ECO:0007669"/>
    <property type="project" value="TreeGrafter"/>
</dbReference>
<dbReference type="GO" id="GO:0003735">
    <property type="term" value="F:structural constituent of ribosome"/>
    <property type="evidence" value="ECO:0007669"/>
    <property type="project" value="InterPro"/>
</dbReference>
<dbReference type="GO" id="GO:0006412">
    <property type="term" value="P:translation"/>
    <property type="evidence" value="ECO:0007669"/>
    <property type="project" value="UniProtKB-UniRule"/>
</dbReference>
<dbReference type="Gene3D" id="2.20.28.120">
    <property type="entry name" value="Ribosomal protein L33"/>
    <property type="match status" value="1"/>
</dbReference>
<dbReference type="HAMAP" id="MF_00294">
    <property type="entry name" value="Ribosomal_bL33"/>
    <property type="match status" value="1"/>
</dbReference>
<dbReference type="InterPro" id="IPR001705">
    <property type="entry name" value="Ribosomal_bL33"/>
</dbReference>
<dbReference type="InterPro" id="IPR018264">
    <property type="entry name" value="Ribosomal_bL33_CS"/>
</dbReference>
<dbReference type="InterPro" id="IPR038584">
    <property type="entry name" value="Ribosomal_bL33_sf"/>
</dbReference>
<dbReference type="InterPro" id="IPR011332">
    <property type="entry name" value="Ribosomal_zn-bd"/>
</dbReference>
<dbReference type="NCBIfam" id="NF001860">
    <property type="entry name" value="PRK00595.1"/>
    <property type="match status" value="1"/>
</dbReference>
<dbReference type="NCBIfam" id="TIGR01023">
    <property type="entry name" value="rpmG_bact"/>
    <property type="match status" value="1"/>
</dbReference>
<dbReference type="PANTHER" id="PTHR15238">
    <property type="entry name" value="54S RIBOSOMAL PROTEIN L39, MITOCHONDRIAL"/>
    <property type="match status" value="1"/>
</dbReference>
<dbReference type="PANTHER" id="PTHR15238:SF1">
    <property type="entry name" value="LARGE RIBOSOMAL SUBUNIT PROTEIN BL33M"/>
    <property type="match status" value="1"/>
</dbReference>
<dbReference type="Pfam" id="PF00471">
    <property type="entry name" value="Ribosomal_L33"/>
    <property type="match status" value="1"/>
</dbReference>
<dbReference type="SUPFAM" id="SSF57829">
    <property type="entry name" value="Zn-binding ribosomal proteins"/>
    <property type="match status" value="1"/>
</dbReference>
<dbReference type="PROSITE" id="PS00582">
    <property type="entry name" value="RIBOSOMAL_L33"/>
    <property type="match status" value="1"/>
</dbReference>
<accession>B0T0I3</accession>
<keyword id="KW-0687">Ribonucleoprotein</keyword>
<keyword id="KW-0689">Ribosomal protein</keyword>
<gene>
    <name evidence="1" type="primary">rpmG</name>
    <name type="ordered locus">Caul_1499</name>
</gene>
<name>RL33_CAUSK</name>
<sequence>MAKPASIKIRLNSTADTGFFYVTKKNARTKTEKMVLKKYDPVIRKHVEFKEGKIK</sequence>
<reference key="1">
    <citation type="submission" date="2008-01" db="EMBL/GenBank/DDBJ databases">
        <title>Complete sequence of chromosome of Caulobacter sp. K31.</title>
        <authorList>
            <consortium name="US DOE Joint Genome Institute"/>
            <person name="Copeland A."/>
            <person name="Lucas S."/>
            <person name="Lapidus A."/>
            <person name="Barry K."/>
            <person name="Glavina del Rio T."/>
            <person name="Dalin E."/>
            <person name="Tice H."/>
            <person name="Pitluck S."/>
            <person name="Bruce D."/>
            <person name="Goodwin L."/>
            <person name="Thompson L.S."/>
            <person name="Brettin T."/>
            <person name="Detter J.C."/>
            <person name="Han C."/>
            <person name="Schmutz J."/>
            <person name="Larimer F."/>
            <person name="Land M."/>
            <person name="Hauser L."/>
            <person name="Kyrpides N."/>
            <person name="Kim E."/>
            <person name="Stephens C."/>
            <person name="Richardson P."/>
        </authorList>
    </citation>
    <scope>NUCLEOTIDE SEQUENCE [LARGE SCALE GENOMIC DNA]</scope>
    <source>
        <strain>K31</strain>
    </source>
</reference>
<protein>
    <recommendedName>
        <fullName evidence="1">Large ribosomal subunit protein bL33</fullName>
    </recommendedName>
    <alternativeName>
        <fullName evidence="2">50S ribosomal protein L33</fullName>
    </alternativeName>
</protein>
<feature type="chain" id="PRO_0000356422" description="Large ribosomal subunit protein bL33">
    <location>
        <begin position="1"/>
        <end position="55"/>
    </location>
</feature>
<proteinExistence type="inferred from homology"/>
<organism>
    <name type="scientific">Caulobacter sp. (strain K31)</name>
    <dbReference type="NCBI Taxonomy" id="366602"/>
    <lineage>
        <taxon>Bacteria</taxon>
        <taxon>Pseudomonadati</taxon>
        <taxon>Pseudomonadota</taxon>
        <taxon>Alphaproteobacteria</taxon>
        <taxon>Caulobacterales</taxon>
        <taxon>Caulobacteraceae</taxon>
        <taxon>Caulobacter</taxon>
    </lineage>
</organism>
<evidence type="ECO:0000255" key="1">
    <source>
        <dbReference type="HAMAP-Rule" id="MF_00294"/>
    </source>
</evidence>
<evidence type="ECO:0000305" key="2"/>